<accession>B4S891</accession>
<evidence type="ECO:0000255" key="1">
    <source>
        <dbReference type="HAMAP-Rule" id="MF_00719"/>
    </source>
</evidence>
<name>COBS_PROA2</name>
<feature type="chain" id="PRO_1000132592" description="Adenosylcobinamide-GDP ribazoletransferase">
    <location>
        <begin position="1"/>
        <end position="248"/>
    </location>
</feature>
<feature type="transmembrane region" description="Helical" evidence="1">
    <location>
        <begin position="32"/>
        <end position="52"/>
    </location>
</feature>
<feature type="transmembrane region" description="Helical" evidence="1">
    <location>
        <begin position="60"/>
        <end position="80"/>
    </location>
</feature>
<feature type="transmembrane region" description="Helical" evidence="1">
    <location>
        <begin position="103"/>
        <end position="123"/>
    </location>
</feature>
<feature type="transmembrane region" description="Helical" evidence="1">
    <location>
        <begin position="134"/>
        <end position="154"/>
    </location>
</feature>
<feature type="transmembrane region" description="Helical" evidence="1">
    <location>
        <begin position="170"/>
        <end position="190"/>
    </location>
</feature>
<feature type="transmembrane region" description="Helical" evidence="1">
    <location>
        <begin position="195"/>
        <end position="215"/>
    </location>
</feature>
<feature type="transmembrane region" description="Helical" evidence="1">
    <location>
        <begin position="227"/>
        <end position="247"/>
    </location>
</feature>
<organism>
    <name type="scientific">Prosthecochloris aestuarii (strain DSM 271 / SK 413)</name>
    <dbReference type="NCBI Taxonomy" id="290512"/>
    <lineage>
        <taxon>Bacteria</taxon>
        <taxon>Pseudomonadati</taxon>
        <taxon>Chlorobiota</taxon>
        <taxon>Chlorobiia</taxon>
        <taxon>Chlorobiales</taxon>
        <taxon>Chlorobiaceae</taxon>
        <taxon>Prosthecochloris</taxon>
    </lineage>
</organism>
<dbReference type="EC" id="2.7.8.26" evidence="1"/>
<dbReference type="EMBL" id="CP001108">
    <property type="protein sequence ID" value="ACF46278.1"/>
    <property type="molecule type" value="Genomic_DNA"/>
</dbReference>
<dbReference type="RefSeq" id="WP_012505813.1">
    <property type="nucleotide sequence ID" value="NC_011059.1"/>
</dbReference>
<dbReference type="STRING" id="290512.Paes_1252"/>
<dbReference type="KEGG" id="paa:Paes_1252"/>
<dbReference type="eggNOG" id="COG0368">
    <property type="taxonomic scope" value="Bacteria"/>
</dbReference>
<dbReference type="HOGENOM" id="CLU_057426_1_0_10"/>
<dbReference type="UniPathway" id="UPA00148">
    <property type="reaction ID" value="UER00238"/>
</dbReference>
<dbReference type="Proteomes" id="UP000002725">
    <property type="component" value="Chromosome"/>
</dbReference>
<dbReference type="GO" id="GO:0005886">
    <property type="term" value="C:plasma membrane"/>
    <property type="evidence" value="ECO:0007669"/>
    <property type="project" value="UniProtKB-SubCell"/>
</dbReference>
<dbReference type="GO" id="GO:0051073">
    <property type="term" value="F:adenosylcobinamide-GDP ribazoletransferase activity"/>
    <property type="evidence" value="ECO:0007669"/>
    <property type="project" value="UniProtKB-UniRule"/>
</dbReference>
<dbReference type="GO" id="GO:0008818">
    <property type="term" value="F:cobalamin 5'-phosphate synthase activity"/>
    <property type="evidence" value="ECO:0007669"/>
    <property type="project" value="UniProtKB-UniRule"/>
</dbReference>
<dbReference type="GO" id="GO:0009236">
    <property type="term" value="P:cobalamin biosynthetic process"/>
    <property type="evidence" value="ECO:0007669"/>
    <property type="project" value="UniProtKB-UniRule"/>
</dbReference>
<dbReference type="HAMAP" id="MF_00719">
    <property type="entry name" value="CobS"/>
    <property type="match status" value="1"/>
</dbReference>
<dbReference type="InterPro" id="IPR003805">
    <property type="entry name" value="CobS"/>
</dbReference>
<dbReference type="NCBIfam" id="TIGR00317">
    <property type="entry name" value="cobS"/>
    <property type="match status" value="1"/>
</dbReference>
<dbReference type="PANTHER" id="PTHR34148">
    <property type="entry name" value="ADENOSYLCOBINAMIDE-GDP RIBAZOLETRANSFERASE"/>
    <property type="match status" value="1"/>
</dbReference>
<dbReference type="PANTHER" id="PTHR34148:SF1">
    <property type="entry name" value="ADENOSYLCOBINAMIDE-GDP RIBAZOLETRANSFERASE"/>
    <property type="match status" value="1"/>
</dbReference>
<dbReference type="Pfam" id="PF02654">
    <property type="entry name" value="CobS"/>
    <property type="match status" value="1"/>
</dbReference>
<gene>
    <name evidence="1" type="primary">cobS</name>
    <name type="ordered locus">Paes_1252</name>
</gene>
<comment type="function">
    <text evidence="1">Joins adenosylcobinamide-GDP and alpha-ribazole to generate adenosylcobalamin (Ado-cobalamin). Also synthesizes adenosylcobalamin 5'-phosphate from adenosylcobinamide-GDP and alpha-ribazole 5'-phosphate.</text>
</comment>
<comment type="catalytic activity">
    <reaction evidence="1">
        <text>alpha-ribazole + adenosylcob(III)inamide-GDP = adenosylcob(III)alamin + GMP + H(+)</text>
        <dbReference type="Rhea" id="RHEA:16049"/>
        <dbReference type="ChEBI" id="CHEBI:10329"/>
        <dbReference type="ChEBI" id="CHEBI:15378"/>
        <dbReference type="ChEBI" id="CHEBI:18408"/>
        <dbReference type="ChEBI" id="CHEBI:58115"/>
        <dbReference type="ChEBI" id="CHEBI:60487"/>
        <dbReference type="EC" id="2.7.8.26"/>
    </reaction>
</comment>
<comment type="catalytic activity">
    <reaction evidence="1">
        <text>alpha-ribazole 5'-phosphate + adenosylcob(III)inamide-GDP = adenosylcob(III)alamin 5'-phosphate + GMP + H(+)</text>
        <dbReference type="Rhea" id="RHEA:23560"/>
        <dbReference type="ChEBI" id="CHEBI:15378"/>
        <dbReference type="ChEBI" id="CHEBI:57918"/>
        <dbReference type="ChEBI" id="CHEBI:58115"/>
        <dbReference type="ChEBI" id="CHEBI:60487"/>
        <dbReference type="ChEBI" id="CHEBI:60493"/>
        <dbReference type="EC" id="2.7.8.26"/>
    </reaction>
</comment>
<comment type="cofactor">
    <cofactor evidence="1">
        <name>Mg(2+)</name>
        <dbReference type="ChEBI" id="CHEBI:18420"/>
    </cofactor>
</comment>
<comment type="pathway">
    <text evidence="1">Cofactor biosynthesis; adenosylcobalamin biosynthesis; adenosylcobalamin from cob(II)yrinate a,c-diamide: step 7/7.</text>
</comment>
<comment type="subcellular location">
    <subcellularLocation>
        <location evidence="1">Cell inner membrane</location>
        <topology evidence="1">Multi-pass membrane protein</topology>
    </subcellularLocation>
</comment>
<comment type="similarity">
    <text evidence="1">Belongs to the CobS family.</text>
</comment>
<proteinExistence type="inferred from homology"/>
<reference key="1">
    <citation type="submission" date="2008-06" db="EMBL/GenBank/DDBJ databases">
        <title>Complete sequence of chromosome of Prosthecochloris aestuarii DSM 271.</title>
        <authorList>
            <consortium name="US DOE Joint Genome Institute"/>
            <person name="Lucas S."/>
            <person name="Copeland A."/>
            <person name="Lapidus A."/>
            <person name="Glavina del Rio T."/>
            <person name="Dalin E."/>
            <person name="Tice H."/>
            <person name="Bruce D."/>
            <person name="Goodwin L."/>
            <person name="Pitluck S."/>
            <person name="Schmutz J."/>
            <person name="Larimer F."/>
            <person name="Land M."/>
            <person name="Hauser L."/>
            <person name="Kyrpides N."/>
            <person name="Anderson I."/>
            <person name="Liu Z."/>
            <person name="Li T."/>
            <person name="Zhao F."/>
            <person name="Overmann J."/>
            <person name="Bryant D.A."/>
            <person name="Richardson P."/>
        </authorList>
    </citation>
    <scope>NUCLEOTIDE SEQUENCE [LARGE SCALE GENOMIC DNA]</scope>
    <source>
        <strain>DSM 271 / SK 413</strain>
    </source>
</reference>
<keyword id="KW-0997">Cell inner membrane</keyword>
<keyword id="KW-1003">Cell membrane</keyword>
<keyword id="KW-0169">Cobalamin biosynthesis</keyword>
<keyword id="KW-0460">Magnesium</keyword>
<keyword id="KW-0472">Membrane</keyword>
<keyword id="KW-0808">Transferase</keyword>
<keyword id="KW-0812">Transmembrane</keyword>
<keyword id="KW-1133">Transmembrane helix</keyword>
<protein>
    <recommendedName>
        <fullName evidence="1">Adenosylcobinamide-GDP ribazoletransferase</fullName>
        <ecNumber evidence="1">2.7.8.26</ecNumber>
    </recommendedName>
    <alternativeName>
        <fullName evidence="1">Cobalamin synthase</fullName>
    </alternativeName>
    <alternativeName>
        <fullName evidence="1">Cobalamin-5'-phosphate synthase</fullName>
    </alternativeName>
</protein>
<sequence>MLDGLVTAMRTLTVLSVPGKDADEFSRSLYWFPLVGLLLGLLQAALAWIGMVSQIPEFSALLVLLSGVLLTRAIHADGLADLADGFFGGKTRESRLRIMKDPAVGSFGVIALILLFLFKWIALTRIVAHGQYEWIVSGIVLARFVQVVLASVMTYAREGEGTACRFVAGAGGWHVVVAALFSLLILVLVMKMQRLPIVVALLATAVSGSLTGMLAAKKIHGVTGDVLGASSEMTEALVWCSALLLLFY</sequence>